<dbReference type="EC" id="2.7.7.6" evidence="1"/>
<dbReference type="EMBL" id="AP009049">
    <property type="protein sequence ID" value="BAH06313.1"/>
    <property type="molecule type" value="Genomic_DNA"/>
</dbReference>
<dbReference type="RefSeq" id="WP_012101755.1">
    <property type="nucleotide sequence ID" value="NC_011837.1"/>
</dbReference>
<dbReference type="SMR" id="B9E1D8"/>
<dbReference type="KEGG" id="ckr:CKR_1262"/>
<dbReference type="HOGENOM" id="CLU_125406_6_1_9"/>
<dbReference type="Proteomes" id="UP000007969">
    <property type="component" value="Chromosome"/>
</dbReference>
<dbReference type="GO" id="GO:0000428">
    <property type="term" value="C:DNA-directed RNA polymerase complex"/>
    <property type="evidence" value="ECO:0007669"/>
    <property type="project" value="UniProtKB-KW"/>
</dbReference>
<dbReference type="GO" id="GO:0003677">
    <property type="term" value="F:DNA binding"/>
    <property type="evidence" value="ECO:0007669"/>
    <property type="project" value="UniProtKB-UniRule"/>
</dbReference>
<dbReference type="GO" id="GO:0003899">
    <property type="term" value="F:DNA-directed RNA polymerase activity"/>
    <property type="evidence" value="ECO:0007669"/>
    <property type="project" value="UniProtKB-UniRule"/>
</dbReference>
<dbReference type="GO" id="GO:0006351">
    <property type="term" value="P:DNA-templated transcription"/>
    <property type="evidence" value="ECO:0007669"/>
    <property type="project" value="UniProtKB-UniRule"/>
</dbReference>
<dbReference type="Gene3D" id="3.90.940.10">
    <property type="match status" value="1"/>
</dbReference>
<dbReference type="HAMAP" id="MF_00366">
    <property type="entry name" value="RNApol_bact_RpoZ"/>
    <property type="match status" value="1"/>
</dbReference>
<dbReference type="InterPro" id="IPR003716">
    <property type="entry name" value="DNA-dir_RNA_pol_omega"/>
</dbReference>
<dbReference type="InterPro" id="IPR006110">
    <property type="entry name" value="Pol_omega/Rpo6/RPB6"/>
</dbReference>
<dbReference type="InterPro" id="IPR036161">
    <property type="entry name" value="RPB6/omega-like_sf"/>
</dbReference>
<dbReference type="NCBIfam" id="TIGR00690">
    <property type="entry name" value="rpoZ"/>
    <property type="match status" value="1"/>
</dbReference>
<dbReference type="PANTHER" id="PTHR34476">
    <property type="entry name" value="DNA-DIRECTED RNA POLYMERASE SUBUNIT OMEGA"/>
    <property type="match status" value="1"/>
</dbReference>
<dbReference type="PANTHER" id="PTHR34476:SF1">
    <property type="entry name" value="DNA-DIRECTED RNA POLYMERASE SUBUNIT OMEGA"/>
    <property type="match status" value="1"/>
</dbReference>
<dbReference type="Pfam" id="PF01192">
    <property type="entry name" value="RNA_pol_Rpb6"/>
    <property type="match status" value="1"/>
</dbReference>
<dbReference type="SMART" id="SM01409">
    <property type="entry name" value="RNA_pol_Rpb6"/>
    <property type="match status" value="1"/>
</dbReference>
<dbReference type="SUPFAM" id="SSF63562">
    <property type="entry name" value="RPB6/omega subunit-like"/>
    <property type="match status" value="1"/>
</dbReference>
<protein>
    <recommendedName>
        <fullName evidence="1">DNA-directed RNA polymerase subunit omega</fullName>
        <shortName evidence="1">RNAP omega subunit</shortName>
        <ecNumber evidence="1">2.7.7.6</ecNumber>
    </recommendedName>
    <alternativeName>
        <fullName evidence="1">RNA polymerase omega subunit</fullName>
    </alternativeName>
    <alternativeName>
        <fullName evidence="1">Transcriptase subunit omega</fullName>
    </alternativeName>
</protein>
<accession>B9E1D8</accession>
<comment type="function">
    <text evidence="1">Promotes RNA polymerase assembly. Latches the N- and C-terminal regions of the beta' subunit thereby facilitating its interaction with the beta and alpha subunits.</text>
</comment>
<comment type="catalytic activity">
    <reaction evidence="1">
        <text>RNA(n) + a ribonucleoside 5'-triphosphate = RNA(n+1) + diphosphate</text>
        <dbReference type="Rhea" id="RHEA:21248"/>
        <dbReference type="Rhea" id="RHEA-COMP:14527"/>
        <dbReference type="Rhea" id="RHEA-COMP:17342"/>
        <dbReference type="ChEBI" id="CHEBI:33019"/>
        <dbReference type="ChEBI" id="CHEBI:61557"/>
        <dbReference type="ChEBI" id="CHEBI:140395"/>
        <dbReference type="EC" id="2.7.7.6"/>
    </reaction>
</comment>
<comment type="subunit">
    <text evidence="1">The RNAP catalytic core consists of 2 alpha, 1 beta, 1 beta' and 1 omega subunit. When a sigma factor is associated with the core the holoenzyme is formed, which can initiate transcription.</text>
</comment>
<comment type="similarity">
    <text evidence="1">Belongs to the RNA polymerase subunit omega family.</text>
</comment>
<reference key="1">
    <citation type="submission" date="2005-09" db="EMBL/GenBank/DDBJ databases">
        <title>Complete genome sequence of Clostridium kluyveri and comparative genomics of Clostridia species.</title>
        <authorList>
            <person name="Inui M."/>
            <person name="Nonaka H."/>
            <person name="Shinoda Y."/>
            <person name="Ikenaga Y."/>
            <person name="Abe M."/>
            <person name="Naito K."/>
            <person name="Vertes A.A."/>
            <person name="Yukawa H."/>
        </authorList>
    </citation>
    <scope>NUCLEOTIDE SEQUENCE [LARGE SCALE GENOMIC DNA]</scope>
    <source>
        <strain>NBRC 12016</strain>
    </source>
</reference>
<keyword id="KW-0240">DNA-directed RNA polymerase</keyword>
<keyword id="KW-0548">Nucleotidyltransferase</keyword>
<keyword id="KW-0804">Transcription</keyword>
<keyword id="KW-0808">Transferase</keyword>
<feature type="chain" id="PRO_1000194788" description="DNA-directed RNA polymerase subunit omega">
    <location>
        <begin position="1"/>
        <end position="72"/>
    </location>
</feature>
<gene>
    <name evidence="1" type="primary">rpoZ</name>
    <name type="ordered locus">CKR_1262</name>
</gene>
<organism>
    <name type="scientific">Clostridium kluyveri (strain NBRC 12016)</name>
    <dbReference type="NCBI Taxonomy" id="583346"/>
    <lineage>
        <taxon>Bacteria</taxon>
        <taxon>Bacillati</taxon>
        <taxon>Bacillota</taxon>
        <taxon>Clostridia</taxon>
        <taxon>Eubacteriales</taxon>
        <taxon>Clostridiaceae</taxon>
        <taxon>Clostridium</taxon>
    </lineage>
</organism>
<sequence>MNNSMINPSIVDLLKKVENRYTLVTMTAKRARQLIEGSEALVDIDSTKPVTIAIKEISDRAITYETVKEGIK</sequence>
<evidence type="ECO:0000255" key="1">
    <source>
        <dbReference type="HAMAP-Rule" id="MF_00366"/>
    </source>
</evidence>
<proteinExistence type="inferred from homology"/>
<name>RPOZ_CLOK1</name>